<gene>
    <name type="primary">GH1</name>
    <name type="synonym">GH</name>
</gene>
<protein>
    <recommendedName>
        <fullName>Somatotropin</fullName>
    </recommendedName>
    <alternativeName>
        <fullName>Growth hormone</fullName>
    </alternativeName>
</protein>
<keyword id="KW-1015">Disulfide bond</keyword>
<keyword id="KW-0372">Hormone</keyword>
<keyword id="KW-0479">Metal-binding</keyword>
<keyword id="KW-0597">Phosphoprotein</keyword>
<keyword id="KW-0964">Secreted</keyword>
<keyword id="KW-0732">Signal</keyword>
<keyword id="KW-0862">Zinc</keyword>
<evidence type="ECO:0000250" key="1"/>
<evidence type="ECO:0000250" key="2">
    <source>
        <dbReference type="UniProtKB" id="P01241"/>
    </source>
</evidence>
<evidence type="ECO:0000305" key="3"/>
<dbReference type="EMBL" id="AJ005819">
    <property type="protein sequence ID" value="CAA06716.1"/>
    <property type="molecule type" value="Genomic_DNA"/>
</dbReference>
<dbReference type="SMR" id="O70615"/>
<dbReference type="GO" id="GO:0005615">
    <property type="term" value="C:extracellular space"/>
    <property type="evidence" value="ECO:0007669"/>
    <property type="project" value="InterPro"/>
</dbReference>
<dbReference type="GO" id="GO:0008083">
    <property type="term" value="F:growth factor activity"/>
    <property type="evidence" value="ECO:0007669"/>
    <property type="project" value="TreeGrafter"/>
</dbReference>
<dbReference type="GO" id="GO:0005131">
    <property type="term" value="F:growth hormone receptor binding"/>
    <property type="evidence" value="ECO:0007669"/>
    <property type="project" value="InterPro"/>
</dbReference>
<dbReference type="GO" id="GO:0005179">
    <property type="term" value="F:hormone activity"/>
    <property type="evidence" value="ECO:0007669"/>
    <property type="project" value="UniProtKB-KW"/>
</dbReference>
<dbReference type="GO" id="GO:0046872">
    <property type="term" value="F:metal ion binding"/>
    <property type="evidence" value="ECO:0007669"/>
    <property type="project" value="UniProtKB-KW"/>
</dbReference>
<dbReference type="GO" id="GO:0048513">
    <property type="term" value="P:animal organ development"/>
    <property type="evidence" value="ECO:0007669"/>
    <property type="project" value="TreeGrafter"/>
</dbReference>
<dbReference type="GO" id="GO:0060396">
    <property type="term" value="P:growth hormone receptor signaling pathway"/>
    <property type="evidence" value="ECO:0007669"/>
    <property type="project" value="TreeGrafter"/>
</dbReference>
<dbReference type="GO" id="GO:0045927">
    <property type="term" value="P:positive regulation of growth"/>
    <property type="evidence" value="ECO:0007669"/>
    <property type="project" value="TreeGrafter"/>
</dbReference>
<dbReference type="GO" id="GO:0046427">
    <property type="term" value="P:positive regulation of receptor signaling pathway via JAK-STAT"/>
    <property type="evidence" value="ECO:0007669"/>
    <property type="project" value="TreeGrafter"/>
</dbReference>
<dbReference type="GO" id="GO:0031667">
    <property type="term" value="P:response to nutrient levels"/>
    <property type="evidence" value="ECO:0007669"/>
    <property type="project" value="TreeGrafter"/>
</dbReference>
<dbReference type="CDD" id="cd10285">
    <property type="entry name" value="somatotropin_like"/>
    <property type="match status" value="1"/>
</dbReference>
<dbReference type="FunFam" id="1.20.1250.10:FF:000002">
    <property type="entry name" value="Growth hormone"/>
    <property type="match status" value="1"/>
</dbReference>
<dbReference type="Gene3D" id="1.20.1250.10">
    <property type="match status" value="1"/>
</dbReference>
<dbReference type="InterPro" id="IPR009079">
    <property type="entry name" value="4_helix_cytokine-like_core"/>
</dbReference>
<dbReference type="InterPro" id="IPR034975">
    <property type="entry name" value="Somatotropin"/>
</dbReference>
<dbReference type="InterPro" id="IPR001400">
    <property type="entry name" value="Somatotropin/Prolactin"/>
</dbReference>
<dbReference type="InterPro" id="IPR018116">
    <property type="entry name" value="Somatotropin_CS"/>
</dbReference>
<dbReference type="PANTHER" id="PTHR11417:SF2">
    <property type="entry name" value="SOMATOTROPIN"/>
    <property type="match status" value="1"/>
</dbReference>
<dbReference type="PANTHER" id="PTHR11417">
    <property type="entry name" value="SOMATOTROPIN,PROLACTIN"/>
    <property type="match status" value="1"/>
</dbReference>
<dbReference type="Pfam" id="PF00103">
    <property type="entry name" value="Hormone_1"/>
    <property type="match status" value="1"/>
</dbReference>
<dbReference type="PRINTS" id="PR00836">
    <property type="entry name" value="SOMATOTROPIN"/>
</dbReference>
<dbReference type="SUPFAM" id="SSF47266">
    <property type="entry name" value="4-helical cytokines"/>
    <property type="match status" value="1"/>
</dbReference>
<dbReference type="PROSITE" id="PS00266">
    <property type="entry name" value="SOMATOTROPIN_1"/>
    <property type="match status" value="1"/>
</dbReference>
<dbReference type="PROSITE" id="PS00338">
    <property type="entry name" value="SOMATOTROPIN_2"/>
    <property type="match status" value="1"/>
</dbReference>
<proteinExistence type="inferred from homology"/>
<name>SOMA_SPAEH</name>
<reference key="1">
    <citation type="journal article" date="1999" name="J. Mol. Endocrinol.">
        <title>Cloning and characterisation of the gene encoding mole rat (Spalax ehrenbergi) growth hormone.</title>
        <authorList>
            <person name="Lioupis A."/>
            <person name="Nevo E."/>
            <person name="Wallis M."/>
        </authorList>
    </citation>
    <scope>NUCLEOTIDE SEQUENCE [GENOMIC DNA]</scope>
</reference>
<accession>O70615</accession>
<organism>
    <name type="scientific">Spalax ehrenbergi</name>
    <name type="common">Middle East blind mole rat</name>
    <name type="synonym">Nannospalax ehrenbergi</name>
    <dbReference type="NCBI Taxonomy" id="30637"/>
    <lineage>
        <taxon>Eukaryota</taxon>
        <taxon>Metazoa</taxon>
        <taxon>Chordata</taxon>
        <taxon>Craniata</taxon>
        <taxon>Vertebrata</taxon>
        <taxon>Euteleostomi</taxon>
        <taxon>Mammalia</taxon>
        <taxon>Eutheria</taxon>
        <taxon>Euarchontoglires</taxon>
        <taxon>Glires</taxon>
        <taxon>Rodentia</taxon>
        <taxon>Myomorpha</taxon>
        <taxon>Muroidea</taxon>
        <taxon>Spalacidae</taxon>
        <taxon>Spalacinae</taxon>
        <taxon>Nannospalax</taxon>
    </lineage>
</organism>
<sequence>MATGSQTSWLLTFTLLCLPWPQEAGAFPAMPLSNLFANAVLRAQHLHQLAADTYKEFERAYIPEGQRYSIQNAQAAFCFSETIPAPTGKEEAQQRSDMELLRFSLLLIQSWLGPVQFLSRVFTNSLVFGTSDRVFEKLKDLEEGIQALMRELEDGSLRAGQLLKQTYDKFDTNMRSDDALLKNYGLLSCFKKDLHKAETYLRVMKCRRFVESSCAF</sequence>
<feature type="signal peptide" evidence="1">
    <location>
        <begin position="1"/>
        <end position="26"/>
    </location>
</feature>
<feature type="chain" id="PRO_0000033001" description="Somatotropin">
    <location>
        <begin position="27"/>
        <end position="216"/>
    </location>
</feature>
<feature type="binding site" evidence="1">
    <location>
        <position position="45"/>
    </location>
    <ligand>
        <name>Zn(2+)</name>
        <dbReference type="ChEBI" id="CHEBI:29105"/>
    </ligand>
</feature>
<feature type="binding site" evidence="1">
    <location>
        <position position="198"/>
    </location>
    <ligand>
        <name>Zn(2+)</name>
        <dbReference type="ChEBI" id="CHEBI:29105"/>
    </ligand>
</feature>
<feature type="modified residue" description="Phosphoserine" evidence="2">
    <location>
        <position position="131"/>
    </location>
</feature>
<feature type="disulfide bond" evidence="1">
    <location>
        <begin position="78"/>
        <end position="189"/>
    </location>
</feature>
<feature type="disulfide bond" evidence="1">
    <location>
        <begin position="206"/>
        <end position="214"/>
    </location>
</feature>
<comment type="function">
    <text evidence="1">Plays an important role in growth control. Its major role in stimulating body growth is to stimulate the liver and other tissues to secrete IGF1. It stimulates both the differentiation and proliferation of myoblasts. It also stimulates amino acid uptake and protein synthesis in muscle and other tissues (By similarity).</text>
</comment>
<comment type="subcellular location">
    <subcellularLocation>
        <location>Secreted</location>
    </subcellularLocation>
</comment>
<comment type="similarity">
    <text evidence="3">Belongs to the somatotropin/prolactin family.</text>
</comment>